<name>METK_PROMH</name>
<organism>
    <name type="scientific">Proteus mirabilis (strain HI4320)</name>
    <dbReference type="NCBI Taxonomy" id="529507"/>
    <lineage>
        <taxon>Bacteria</taxon>
        <taxon>Pseudomonadati</taxon>
        <taxon>Pseudomonadota</taxon>
        <taxon>Gammaproteobacteria</taxon>
        <taxon>Enterobacterales</taxon>
        <taxon>Morganellaceae</taxon>
        <taxon>Proteus</taxon>
    </lineage>
</organism>
<accession>B4F1A5</accession>
<sequence>MTTHLFTSESVSEGHPDKIADQISDAVLDAILEQDPKARVACETYVKTGMVMVGGEITTKAWVDIEEITRKTVREIGYTSSDMGFDANSCAVISAIGKQSPDINQGVDRADPLEQGAGDQGLMFGYATNETDVLMPAPITYAHRLVQRQAQVRKNGTLPWLRPDAKSQITFQYDNNNIVGIDAVVLSTQHAEDISQKDLHEAVMEEIIKPILPTEWLNEQTKYFINPTGRFVIGGPMGDCGLTGRKIIVDTYGGMARHGGGAFSGKDPSKVDRSAAYAARYVAKNIVAAGLADRCEIQVSYAIGVAEPTSIMVETFGTEKIPTSQLILLVREFFDLRPYGLIQMLDLLHPIYQKTAAYGHFGRAEFPWEATDKAEILREAAGLK</sequence>
<gene>
    <name evidence="1" type="primary">metK</name>
    <name type="ordered locus">PMI2095</name>
</gene>
<dbReference type="EC" id="2.5.1.6" evidence="1"/>
<dbReference type="EMBL" id="AM942759">
    <property type="protein sequence ID" value="CAR44186.1"/>
    <property type="molecule type" value="Genomic_DNA"/>
</dbReference>
<dbReference type="RefSeq" id="WP_004244148.1">
    <property type="nucleotide sequence ID" value="NC_010554.1"/>
</dbReference>
<dbReference type="SMR" id="B4F1A5"/>
<dbReference type="EnsemblBacteria" id="CAR44186">
    <property type="protein sequence ID" value="CAR44186"/>
    <property type="gene ID" value="PMI2095"/>
</dbReference>
<dbReference type="GeneID" id="6803072"/>
<dbReference type="KEGG" id="pmr:PMI2095"/>
<dbReference type="eggNOG" id="COG0192">
    <property type="taxonomic scope" value="Bacteria"/>
</dbReference>
<dbReference type="HOGENOM" id="CLU_041802_1_1_6"/>
<dbReference type="UniPathway" id="UPA00315">
    <property type="reaction ID" value="UER00080"/>
</dbReference>
<dbReference type="Proteomes" id="UP000008319">
    <property type="component" value="Chromosome"/>
</dbReference>
<dbReference type="GO" id="GO:0005737">
    <property type="term" value="C:cytoplasm"/>
    <property type="evidence" value="ECO:0007669"/>
    <property type="project" value="UniProtKB-SubCell"/>
</dbReference>
<dbReference type="GO" id="GO:0005524">
    <property type="term" value="F:ATP binding"/>
    <property type="evidence" value="ECO:0007669"/>
    <property type="project" value="UniProtKB-UniRule"/>
</dbReference>
<dbReference type="GO" id="GO:0000287">
    <property type="term" value="F:magnesium ion binding"/>
    <property type="evidence" value="ECO:0007669"/>
    <property type="project" value="UniProtKB-UniRule"/>
</dbReference>
<dbReference type="GO" id="GO:0004478">
    <property type="term" value="F:methionine adenosyltransferase activity"/>
    <property type="evidence" value="ECO:0007669"/>
    <property type="project" value="UniProtKB-UniRule"/>
</dbReference>
<dbReference type="GO" id="GO:0006730">
    <property type="term" value="P:one-carbon metabolic process"/>
    <property type="evidence" value="ECO:0007669"/>
    <property type="project" value="UniProtKB-KW"/>
</dbReference>
<dbReference type="GO" id="GO:0006556">
    <property type="term" value="P:S-adenosylmethionine biosynthetic process"/>
    <property type="evidence" value="ECO:0007669"/>
    <property type="project" value="UniProtKB-UniRule"/>
</dbReference>
<dbReference type="CDD" id="cd18079">
    <property type="entry name" value="S-AdoMet_synt"/>
    <property type="match status" value="1"/>
</dbReference>
<dbReference type="FunFam" id="3.30.300.10:FF:000001">
    <property type="entry name" value="S-adenosylmethionine synthase"/>
    <property type="match status" value="1"/>
</dbReference>
<dbReference type="FunFam" id="3.30.300.10:FF:000003">
    <property type="entry name" value="S-adenosylmethionine synthase"/>
    <property type="match status" value="1"/>
</dbReference>
<dbReference type="Gene3D" id="3.30.300.10">
    <property type="match status" value="3"/>
</dbReference>
<dbReference type="HAMAP" id="MF_00086">
    <property type="entry name" value="S_AdoMet_synth1"/>
    <property type="match status" value="1"/>
</dbReference>
<dbReference type="InterPro" id="IPR022631">
    <property type="entry name" value="ADOMET_SYNTHASE_CS"/>
</dbReference>
<dbReference type="InterPro" id="IPR022630">
    <property type="entry name" value="S-AdoMet_synt_C"/>
</dbReference>
<dbReference type="InterPro" id="IPR022629">
    <property type="entry name" value="S-AdoMet_synt_central"/>
</dbReference>
<dbReference type="InterPro" id="IPR022628">
    <property type="entry name" value="S-AdoMet_synt_N"/>
</dbReference>
<dbReference type="InterPro" id="IPR002133">
    <property type="entry name" value="S-AdoMet_synthetase"/>
</dbReference>
<dbReference type="InterPro" id="IPR022636">
    <property type="entry name" value="S-AdoMet_synthetase_sfam"/>
</dbReference>
<dbReference type="NCBIfam" id="TIGR01034">
    <property type="entry name" value="metK"/>
    <property type="match status" value="1"/>
</dbReference>
<dbReference type="PANTHER" id="PTHR11964">
    <property type="entry name" value="S-ADENOSYLMETHIONINE SYNTHETASE"/>
    <property type="match status" value="1"/>
</dbReference>
<dbReference type="Pfam" id="PF02773">
    <property type="entry name" value="S-AdoMet_synt_C"/>
    <property type="match status" value="1"/>
</dbReference>
<dbReference type="Pfam" id="PF02772">
    <property type="entry name" value="S-AdoMet_synt_M"/>
    <property type="match status" value="1"/>
</dbReference>
<dbReference type="Pfam" id="PF00438">
    <property type="entry name" value="S-AdoMet_synt_N"/>
    <property type="match status" value="1"/>
</dbReference>
<dbReference type="PIRSF" id="PIRSF000497">
    <property type="entry name" value="MAT"/>
    <property type="match status" value="1"/>
</dbReference>
<dbReference type="SUPFAM" id="SSF55973">
    <property type="entry name" value="S-adenosylmethionine synthetase"/>
    <property type="match status" value="3"/>
</dbReference>
<dbReference type="PROSITE" id="PS00376">
    <property type="entry name" value="ADOMET_SYNTHASE_1"/>
    <property type="match status" value="1"/>
</dbReference>
<dbReference type="PROSITE" id="PS00377">
    <property type="entry name" value="ADOMET_SYNTHASE_2"/>
    <property type="match status" value="1"/>
</dbReference>
<evidence type="ECO:0000255" key="1">
    <source>
        <dbReference type="HAMAP-Rule" id="MF_00086"/>
    </source>
</evidence>
<reference key="1">
    <citation type="journal article" date="2008" name="J. Bacteriol.">
        <title>Complete genome sequence of uropathogenic Proteus mirabilis, a master of both adherence and motility.</title>
        <authorList>
            <person name="Pearson M.M."/>
            <person name="Sebaihia M."/>
            <person name="Churcher C."/>
            <person name="Quail M.A."/>
            <person name="Seshasayee A.S."/>
            <person name="Luscombe N.M."/>
            <person name="Abdellah Z."/>
            <person name="Arrosmith C."/>
            <person name="Atkin B."/>
            <person name="Chillingworth T."/>
            <person name="Hauser H."/>
            <person name="Jagels K."/>
            <person name="Moule S."/>
            <person name="Mungall K."/>
            <person name="Norbertczak H."/>
            <person name="Rabbinowitsch E."/>
            <person name="Walker D."/>
            <person name="Whithead S."/>
            <person name="Thomson N.R."/>
            <person name="Rather P.N."/>
            <person name="Parkhill J."/>
            <person name="Mobley H.L.T."/>
        </authorList>
    </citation>
    <scope>NUCLEOTIDE SEQUENCE [LARGE SCALE GENOMIC DNA]</scope>
    <source>
        <strain>HI4320</strain>
    </source>
</reference>
<protein>
    <recommendedName>
        <fullName evidence="1">S-adenosylmethionine synthase</fullName>
        <shortName evidence="1">AdoMet synthase</shortName>
        <ecNumber evidence="1">2.5.1.6</ecNumber>
    </recommendedName>
    <alternativeName>
        <fullName evidence="1">MAT</fullName>
    </alternativeName>
    <alternativeName>
        <fullName evidence="1">Methionine adenosyltransferase</fullName>
    </alternativeName>
</protein>
<feature type="chain" id="PRO_1000093073" description="S-adenosylmethionine synthase">
    <location>
        <begin position="1"/>
        <end position="384"/>
    </location>
</feature>
<feature type="region of interest" description="Flexible loop" evidence="1">
    <location>
        <begin position="99"/>
        <end position="109"/>
    </location>
</feature>
<feature type="binding site" description="in other chain" evidence="1">
    <location>
        <position position="15"/>
    </location>
    <ligand>
        <name>ATP</name>
        <dbReference type="ChEBI" id="CHEBI:30616"/>
        <note>ligand shared between two neighboring subunits</note>
    </ligand>
</feature>
<feature type="binding site" evidence="1">
    <location>
        <position position="17"/>
    </location>
    <ligand>
        <name>Mg(2+)</name>
        <dbReference type="ChEBI" id="CHEBI:18420"/>
    </ligand>
</feature>
<feature type="binding site" evidence="1">
    <location>
        <position position="43"/>
    </location>
    <ligand>
        <name>K(+)</name>
        <dbReference type="ChEBI" id="CHEBI:29103"/>
    </ligand>
</feature>
<feature type="binding site" description="in other chain" evidence="1">
    <location>
        <position position="56"/>
    </location>
    <ligand>
        <name>L-methionine</name>
        <dbReference type="ChEBI" id="CHEBI:57844"/>
        <note>ligand shared between two neighboring subunits</note>
    </ligand>
</feature>
<feature type="binding site" description="in other chain" evidence="1">
    <location>
        <position position="99"/>
    </location>
    <ligand>
        <name>L-methionine</name>
        <dbReference type="ChEBI" id="CHEBI:57844"/>
        <note>ligand shared between two neighboring subunits</note>
    </ligand>
</feature>
<feature type="binding site" description="in other chain" evidence="1">
    <location>
        <begin position="164"/>
        <end position="166"/>
    </location>
    <ligand>
        <name>ATP</name>
        <dbReference type="ChEBI" id="CHEBI:30616"/>
        <note>ligand shared between two neighboring subunits</note>
    </ligand>
</feature>
<feature type="binding site" description="in other chain" evidence="1">
    <location>
        <begin position="230"/>
        <end position="231"/>
    </location>
    <ligand>
        <name>ATP</name>
        <dbReference type="ChEBI" id="CHEBI:30616"/>
        <note>ligand shared between two neighboring subunits</note>
    </ligand>
</feature>
<feature type="binding site" evidence="1">
    <location>
        <position position="239"/>
    </location>
    <ligand>
        <name>ATP</name>
        <dbReference type="ChEBI" id="CHEBI:30616"/>
        <note>ligand shared between two neighboring subunits</note>
    </ligand>
</feature>
<feature type="binding site" evidence="1">
    <location>
        <position position="239"/>
    </location>
    <ligand>
        <name>L-methionine</name>
        <dbReference type="ChEBI" id="CHEBI:57844"/>
        <note>ligand shared between two neighboring subunits</note>
    </ligand>
</feature>
<feature type="binding site" description="in other chain" evidence="1">
    <location>
        <begin position="245"/>
        <end position="246"/>
    </location>
    <ligand>
        <name>ATP</name>
        <dbReference type="ChEBI" id="CHEBI:30616"/>
        <note>ligand shared between two neighboring subunits</note>
    </ligand>
</feature>
<feature type="binding site" evidence="1">
    <location>
        <position position="262"/>
    </location>
    <ligand>
        <name>ATP</name>
        <dbReference type="ChEBI" id="CHEBI:30616"/>
        <note>ligand shared between two neighboring subunits</note>
    </ligand>
</feature>
<feature type="binding site" evidence="1">
    <location>
        <position position="266"/>
    </location>
    <ligand>
        <name>ATP</name>
        <dbReference type="ChEBI" id="CHEBI:30616"/>
        <note>ligand shared between two neighboring subunits</note>
    </ligand>
</feature>
<feature type="binding site" description="in other chain" evidence="1">
    <location>
        <position position="270"/>
    </location>
    <ligand>
        <name>L-methionine</name>
        <dbReference type="ChEBI" id="CHEBI:57844"/>
        <note>ligand shared between two neighboring subunits</note>
    </ligand>
</feature>
<comment type="function">
    <text evidence="1">Catalyzes the formation of S-adenosylmethionine (AdoMet) from methionine and ATP. The overall synthetic reaction is composed of two sequential steps, AdoMet formation and the subsequent tripolyphosphate hydrolysis which occurs prior to release of AdoMet from the enzyme.</text>
</comment>
<comment type="catalytic activity">
    <reaction evidence="1">
        <text>L-methionine + ATP + H2O = S-adenosyl-L-methionine + phosphate + diphosphate</text>
        <dbReference type="Rhea" id="RHEA:21080"/>
        <dbReference type="ChEBI" id="CHEBI:15377"/>
        <dbReference type="ChEBI" id="CHEBI:30616"/>
        <dbReference type="ChEBI" id="CHEBI:33019"/>
        <dbReference type="ChEBI" id="CHEBI:43474"/>
        <dbReference type="ChEBI" id="CHEBI:57844"/>
        <dbReference type="ChEBI" id="CHEBI:59789"/>
        <dbReference type="EC" id="2.5.1.6"/>
    </reaction>
</comment>
<comment type="cofactor">
    <cofactor evidence="1">
        <name>Mg(2+)</name>
        <dbReference type="ChEBI" id="CHEBI:18420"/>
    </cofactor>
    <text evidence="1">Binds 2 divalent ions per subunit.</text>
</comment>
<comment type="cofactor">
    <cofactor evidence="1">
        <name>K(+)</name>
        <dbReference type="ChEBI" id="CHEBI:29103"/>
    </cofactor>
    <text evidence="1">Binds 1 potassium ion per subunit.</text>
</comment>
<comment type="pathway">
    <text evidence="1">Amino-acid biosynthesis; S-adenosyl-L-methionine biosynthesis; S-adenosyl-L-methionine from L-methionine: step 1/1.</text>
</comment>
<comment type="subunit">
    <text evidence="1">Homotetramer; dimer of dimers.</text>
</comment>
<comment type="subcellular location">
    <subcellularLocation>
        <location evidence="1">Cytoplasm</location>
    </subcellularLocation>
</comment>
<comment type="similarity">
    <text evidence="1">Belongs to the AdoMet synthase family.</text>
</comment>
<proteinExistence type="inferred from homology"/>
<keyword id="KW-0067">ATP-binding</keyword>
<keyword id="KW-0963">Cytoplasm</keyword>
<keyword id="KW-0460">Magnesium</keyword>
<keyword id="KW-0479">Metal-binding</keyword>
<keyword id="KW-0547">Nucleotide-binding</keyword>
<keyword id="KW-0554">One-carbon metabolism</keyword>
<keyword id="KW-0630">Potassium</keyword>
<keyword id="KW-1185">Reference proteome</keyword>
<keyword id="KW-0808">Transferase</keyword>